<accession>Q90VW7</accession>
<keyword id="KW-0002">3D-structure</keyword>
<keyword id="KW-0044">Antibiotic</keyword>
<keyword id="KW-0929">Antimicrobial</keyword>
<keyword id="KW-0964">Secreted</keyword>
<keyword id="KW-0732">Signal</keyword>
<reference key="1">
    <citation type="journal article" date="2001" name="Dev. Comp. Immunol.">
        <title>Cloning and developmental expression of a family of pleurocidin-like antimicrobial peptides from winter flounder, Pleuronectes americanus (Walbaum).</title>
        <authorList>
            <person name="Douglas S.E."/>
            <person name="Gallant J.W."/>
            <person name="Gong Z."/>
            <person name="Hew C.-L."/>
        </authorList>
    </citation>
    <scope>NUCLEOTIDE SEQUENCE [GENOMIC DNA / MRNA]</scope>
    <source>
        <tissue>Intestine</tissue>
        <tissue>Skin</tissue>
    </source>
</reference>
<sequence length="61" mass="6783">MKFTATFLVLSLVVLMAEPGECFLGALIKGAIHGGRFIHGMIQNHHGYDEQQELNKRAVDE</sequence>
<name>PLE3_PSEAM</name>
<proteinExistence type="evidence at protein level"/>
<comment type="function">
    <text evidence="1">Antimicrobial peptide.</text>
</comment>
<comment type="subcellular location">
    <subcellularLocation>
        <location evidence="1">Secreted</location>
    </subcellularLocation>
</comment>
<comment type="similarity">
    <text evidence="3">Belongs to the pleurocidin family.</text>
</comment>
<evidence type="ECO:0000250" key="1"/>
<evidence type="ECO:0000255" key="2"/>
<evidence type="ECO:0000305" key="3"/>
<evidence type="ECO:0007829" key="4">
    <source>
        <dbReference type="PDB" id="6RZ1"/>
    </source>
</evidence>
<gene>
    <name type="primary">ple3</name>
</gene>
<feature type="signal peptide" evidence="2">
    <location>
        <begin position="1"/>
        <end position="22"/>
    </location>
</feature>
<feature type="peptide" id="PRO_0000000277" description="Pleurocidin-like peptide WF3">
    <location>
        <begin position="23"/>
        <end position="47"/>
    </location>
</feature>
<feature type="propeptide" id="PRO_0000000278" evidence="2">
    <location>
        <begin position="48"/>
        <end position="61"/>
    </location>
</feature>
<feature type="turn" evidence="4">
    <location>
        <begin position="29"/>
        <end position="33"/>
    </location>
</feature>
<feature type="strand" evidence="4">
    <location>
        <begin position="37"/>
        <end position="39"/>
    </location>
</feature>
<feature type="turn" evidence="4">
    <location>
        <begin position="40"/>
        <end position="44"/>
    </location>
</feature>
<dbReference type="EMBL" id="AF301508">
    <property type="protein sequence ID" value="AAK52843.1"/>
    <property type="molecule type" value="mRNA"/>
</dbReference>
<dbReference type="EMBL" id="AF301513">
    <property type="protein sequence ID" value="AAK52848.1"/>
    <property type="molecule type" value="Genomic_DNA"/>
</dbReference>
<dbReference type="PDB" id="6RZ1">
    <property type="method" value="NMR"/>
    <property type="chains" value="A=23-46"/>
</dbReference>
<dbReference type="PDBsum" id="6RZ1"/>
<dbReference type="BMRB" id="Q90VW7"/>
<dbReference type="SMR" id="Q90VW7"/>
<dbReference type="GO" id="GO:0005576">
    <property type="term" value="C:extracellular region"/>
    <property type="evidence" value="ECO:0007669"/>
    <property type="project" value="UniProtKB-SubCell"/>
</dbReference>
<dbReference type="GO" id="GO:0042742">
    <property type="term" value="P:defense response to bacterium"/>
    <property type="evidence" value="ECO:0007669"/>
    <property type="project" value="UniProtKB-KW"/>
</dbReference>
<dbReference type="InterPro" id="IPR012515">
    <property type="entry name" value="Antimicrobial12"/>
</dbReference>
<dbReference type="Pfam" id="PF08107">
    <property type="entry name" value="Antimicrobial12"/>
    <property type="match status" value="1"/>
</dbReference>
<organism>
    <name type="scientific">Pseudopleuronectes americanus</name>
    <name type="common">Winter flounder</name>
    <name type="synonym">Pleuronectes americanus</name>
    <dbReference type="NCBI Taxonomy" id="8265"/>
    <lineage>
        <taxon>Eukaryota</taxon>
        <taxon>Metazoa</taxon>
        <taxon>Chordata</taxon>
        <taxon>Craniata</taxon>
        <taxon>Vertebrata</taxon>
        <taxon>Euteleostomi</taxon>
        <taxon>Actinopterygii</taxon>
        <taxon>Neopterygii</taxon>
        <taxon>Teleostei</taxon>
        <taxon>Neoteleostei</taxon>
        <taxon>Acanthomorphata</taxon>
        <taxon>Carangaria</taxon>
        <taxon>Pleuronectiformes</taxon>
        <taxon>Pleuronectoidei</taxon>
        <taxon>Pleuronectidae</taxon>
        <taxon>Pseudopleuronectes</taxon>
    </lineage>
</organism>
<protein>
    <recommendedName>
        <fullName>Pleurocidin-like peptide WF3</fullName>
    </recommendedName>
</protein>